<accession>A8YUJ6</accession>
<reference key="1">
    <citation type="journal article" date="2008" name="J. Bacteriol.">
        <title>Genome sequence of Lactobacillus helveticus: an organism distinguished by selective gene loss and IS element expansion.</title>
        <authorList>
            <person name="Callanan M."/>
            <person name="Kaleta P."/>
            <person name="O'Callaghan J."/>
            <person name="O'Sullivan O."/>
            <person name="Jordan K."/>
            <person name="McAuliffe O."/>
            <person name="Sangrador-Vegas A."/>
            <person name="Slattery L."/>
            <person name="Fitzgerald G.F."/>
            <person name="Beresford T."/>
            <person name="Ross R.P."/>
        </authorList>
    </citation>
    <scope>NUCLEOTIDE SEQUENCE [LARGE SCALE GENOMIC DNA]</scope>
    <source>
        <strain>DPC 4571</strain>
    </source>
</reference>
<comment type="function">
    <text evidence="1">F(1)F(0) ATP synthase produces ATP from ADP in the presence of a proton or sodium gradient. F-type ATPases consist of two structural domains, F(1) containing the extramembraneous catalytic core and F(0) containing the membrane proton channel, linked together by a central stalk and a peripheral stalk. During catalysis, ATP synthesis in the catalytic domain of F(1) is coupled via a rotary mechanism of the central stalk subunits to proton translocation.</text>
</comment>
<comment type="function">
    <text evidence="1">Key component of the F(0) channel; it plays a direct role in translocation across the membrane. A homomeric c-ring of between 10-14 subunits forms the central stalk rotor element with the F(1) delta and epsilon subunits.</text>
</comment>
<comment type="subunit">
    <text evidence="1">F-type ATPases have 2 components, F(1) - the catalytic core - and F(0) - the membrane proton channel. F(1) has five subunits: alpha(3), beta(3), gamma(1), delta(1), epsilon(1). F(0) has three main subunits: a(1), b(2) and c(10-14). The alpha and beta chains form an alternating ring which encloses part of the gamma chain. F(1) is attached to F(0) by a central stalk formed by the gamma and epsilon chains, while a peripheral stalk is formed by the delta and b chains.</text>
</comment>
<comment type="subcellular location">
    <subcellularLocation>
        <location evidence="1">Cell membrane</location>
        <topology evidence="1">Multi-pass membrane protein</topology>
    </subcellularLocation>
</comment>
<comment type="similarity">
    <text evidence="1">Belongs to the ATPase C chain family.</text>
</comment>
<name>ATPL_LACH4</name>
<gene>
    <name evidence="1" type="primary">atpE</name>
    <name type="ordered locus">lhv_0807</name>
</gene>
<protein>
    <recommendedName>
        <fullName evidence="1">ATP synthase subunit c</fullName>
    </recommendedName>
    <alternativeName>
        <fullName evidence="1">ATP synthase F(0) sector subunit c</fullName>
    </alternativeName>
    <alternativeName>
        <fullName evidence="1">F-type ATPase subunit c</fullName>
        <shortName evidence="1">F-ATPase subunit c</shortName>
    </alternativeName>
    <alternativeName>
        <fullName evidence="1">Lipid-binding protein</fullName>
    </alternativeName>
</protein>
<dbReference type="EMBL" id="CP000517">
    <property type="protein sequence ID" value="ABX26934.1"/>
    <property type="molecule type" value="Genomic_DNA"/>
</dbReference>
<dbReference type="SMR" id="A8YUJ6"/>
<dbReference type="KEGG" id="lhe:lhv_0807"/>
<dbReference type="eggNOG" id="COG0636">
    <property type="taxonomic scope" value="Bacteria"/>
</dbReference>
<dbReference type="HOGENOM" id="CLU_148047_1_1_9"/>
<dbReference type="Proteomes" id="UP000000790">
    <property type="component" value="Chromosome"/>
</dbReference>
<dbReference type="GO" id="GO:0005886">
    <property type="term" value="C:plasma membrane"/>
    <property type="evidence" value="ECO:0007669"/>
    <property type="project" value="UniProtKB-SubCell"/>
</dbReference>
<dbReference type="GO" id="GO:0045259">
    <property type="term" value="C:proton-transporting ATP synthase complex"/>
    <property type="evidence" value="ECO:0007669"/>
    <property type="project" value="UniProtKB-KW"/>
</dbReference>
<dbReference type="GO" id="GO:0033177">
    <property type="term" value="C:proton-transporting two-sector ATPase complex, proton-transporting domain"/>
    <property type="evidence" value="ECO:0007669"/>
    <property type="project" value="InterPro"/>
</dbReference>
<dbReference type="GO" id="GO:0008289">
    <property type="term" value="F:lipid binding"/>
    <property type="evidence" value="ECO:0007669"/>
    <property type="project" value="UniProtKB-KW"/>
</dbReference>
<dbReference type="GO" id="GO:0046933">
    <property type="term" value="F:proton-transporting ATP synthase activity, rotational mechanism"/>
    <property type="evidence" value="ECO:0007669"/>
    <property type="project" value="UniProtKB-UniRule"/>
</dbReference>
<dbReference type="CDD" id="cd18185">
    <property type="entry name" value="ATP-synt_Fo_c_ATPE"/>
    <property type="match status" value="1"/>
</dbReference>
<dbReference type="FunFam" id="1.20.20.10:FF:000004">
    <property type="entry name" value="ATP synthase subunit c"/>
    <property type="match status" value="1"/>
</dbReference>
<dbReference type="Gene3D" id="1.20.20.10">
    <property type="entry name" value="F1F0 ATP synthase subunit C"/>
    <property type="match status" value="1"/>
</dbReference>
<dbReference type="HAMAP" id="MF_01396">
    <property type="entry name" value="ATP_synth_c_bact"/>
    <property type="match status" value="1"/>
</dbReference>
<dbReference type="InterPro" id="IPR005953">
    <property type="entry name" value="ATP_synth_csu_bac/chlpt"/>
</dbReference>
<dbReference type="InterPro" id="IPR000454">
    <property type="entry name" value="ATP_synth_F0_csu"/>
</dbReference>
<dbReference type="InterPro" id="IPR020537">
    <property type="entry name" value="ATP_synth_F0_csu_DDCD_BS"/>
</dbReference>
<dbReference type="InterPro" id="IPR038662">
    <property type="entry name" value="ATP_synth_F0_csu_sf"/>
</dbReference>
<dbReference type="InterPro" id="IPR002379">
    <property type="entry name" value="ATPase_proteolipid_c-like_dom"/>
</dbReference>
<dbReference type="InterPro" id="IPR035921">
    <property type="entry name" value="F/V-ATP_Csub_sf"/>
</dbReference>
<dbReference type="NCBIfam" id="TIGR01260">
    <property type="entry name" value="ATP_synt_c"/>
    <property type="match status" value="1"/>
</dbReference>
<dbReference type="NCBIfam" id="NF005363">
    <property type="entry name" value="PRK06876.1"/>
    <property type="match status" value="1"/>
</dbReference>
<dbReference type="PANTHER" id="PTHR10031">
    <property type="entry name" value="ATP SYNTHASE LIPID-BINDING PROTEIN, MITOCHONDRIAL"/>
    <property type="match status" value="1"/>
</dbReference>
<dbReference type="PANTHER" id="PTHR10031:SF0">
    <property type="entry name" value="ATPASE PROTEIN 9"/>
    <property type="match status" value="1"/>
</dbReference>
<dbReference type="Pfam" id="PF00137">
    <property type="entry name" value="ATP-synt_C"/>
    <property type="match status" value="1"/>
</dbReference>
<dbReference type="PRINTS" id="PR00124">
    <property type="entry name" value="ATPASEC"/>
</dbReference>
<dbReference type="SUPFAM" id="SSF81333">
    <property type="entry name" value="F1F0 ATP synthase subunit C"/>
    <property type="match status" value="1"/>
</dbReference>
<dbReference type="PROSITE" id="PS00605">
    <property type="entry name" value="ATPASE_C"/>
    <property type="match status" value="1"/>
</dbReference>
<sequence length="77" mass="7971">MSFMSEAFKYLAASIAAGLAALAAALGNGKVISKTLEGMARQPESADNLRATMFIGVGLIEAVPILAIVVAFLILFL</sequence>
<proteinExistence type="inferred from homology"/>
<organism>
    <name type="scientific">Lactobacillus helveticus (strain DPC 4571)</name>
    <dbReference type="NCBI Taxonomy" id="405566"/>
    <lineage>
        <taxon>Bacteria</taxon>
        <taxon>Bacillati</taxon>
        <taxon>Bacillota</taxon>
        <taxon>Bacilli</taxon>
        <taxon>Lactobacillales</taxon>
        <taxon>Lactobacillaceae</taxon>
        <taxon>Lactobacillus</taxon>
    </lineage>
</organism>
<evidence type="ECO:0000255" key="1">
    <source>
        <dbReference type="HAMAP-Rule" id="MF_01396"/>
    </source>
</evidence>
<feature type="chain" id="PRO_1000184405" description="ATP synthase subunit c">
    <location>
        <begin position="1"/>
        <end position="77"/>
    </location>
</feature>
<feature type="transmembrane region" description="Helical" evidence="1">
    <location>
        <begin position="7"/>
        <end position="27"/>
    </location>
</feature>
<feature type="transmembrane region" description="Helical" evidence="1">
    <location>
        <begin position="57"/>
        <end position="77"/>
    </location>
</feature>
<feature type="site" description="Reversibly protonated during proton transport" evidence="1">
    <location>
        <position position="61"/>
    </location>
</feature>
<keyword id="KW-0066">ATP synthesis</keyword>
<keyword id="KW-1003">Cell membrane</keyword>
<keyword id="KW-0138">CF(0)</keyword>
<keyword id="KW-0375">Hydrogen ion transport</keyword>
<keyword id="KW-0406">Ion transport</keyword>
<keyword id="KW-0446">Lipid-binding</keyword>
<keyword id="KW-0472">Membrane</keyword>
<keyword id="KW-0812">Transmembrane</keyword>
<keyword id="KW-1133">Transmembrane helix</keyword>
<keyword id="KW-0813">Transport</keyword>